<reference evidence="8 9" key="1">
    <citation type="journal article" date="2003" name="J. Biol. Chem.">
        <title>Resistance to a bacterial toxin is mediated by removal of a conserved glycosylation pathway required for toxin-host interactions.</title>
        <authorList>
            <person name="Griffitts J.S."/>
            <person name="Huffman D.L."/>
            <person name="Whitacre J.L."/>
            <person name="Barrows B.D."/>
            <person name="Marroquin L.D."/>
            <person name="Mueller R."/>
            <person name="Brown J.R."/>
            <person name="Hennet T."/>
            <person name="Esko J.D."/>
            <person name="Aroian R.V."/>
        </authorList>
    </citation>
    <scope>NUCLEOTIDE SEQUENCE [MRNA] (ISOFORM B)</scope>
    <scope>FUNCTION</scope>
    <scope>MUTAGENESIS OF ARG-106</scope>
    <scope>DISRUPTION PHENOTYPE</scope>
</reference>
<reference evidence="8 10" key="2">
    <citation type="journal article" date="1998" name="Science">
        <title>Genome sequence of the nematode C. elegans: a platform for investigating biology.</title>
        <authorList>
            <consortium name="The C. elegans sequencing consortium"/>
        </authorList>
    </citation>
    <scope>NUCLEOTIDE SEQUENCE [LARGE SCALE GENOMIC DNA]</scope>
    <scope>ALTERNATIVE SPLICING</scope>
    <source>
        <strain evidence="10">Bristol N2</strain>
    </source>
</reference>
<reference key="3">
    <citation type="journal article" date="2010" name="PLoS Pathog.">
        <title>Caenorhabditis elegans N-glycan core beta-galactoside confers sensitivity towards nematotoxic fungal galectin CGL2.</title>
        <authorList>
            <person name="Butschi A."/>
            <person name="Titz A."/>
            <person name="Waelti M.A."/>
            <person name="Olieric V."/>
            <person name="Paschinger K."/>
            <person name="Noebauer K."/>
            <person name="Guo X."/>
            <person name="Seeberger P.H."/>
            <person name="Wilson I.B."/>
            <person name="Aebi M."/>
            <person name="Hengartner M.O."/>
            <person name="Kuenzler M."/>
        </authorList>
    </citation>
    <scope>FUNCTION</scope>
    <scope>MUTAGENESIS OF ARG-106</scope>
</reference>
<name>BRE2_CAEEL</name>
<sequence length="359" mass="41370">MRQSRRASSRVNRLVVIFIIVASGFLLLYKNTQQFTQIDRECIQDEWQENNNLGNTIDDGSNFRIAFTDIQQNYTWLHLPNFLENSEILMIVSSNCDNFARRNILRKTWMNPENSQIIGDGRMKALFLVGINGADEKLNAVVLEEAKVFGDMIVIDLEDNYLNLSYKTISLLLYSISKTKSPNLIGKIDEDVLFYPDQLTPLINDKTINTSTFSIYGEKYEAGVAVNHGEDNAKWQISKNSFKCSVYPSYLSGPTYFLTRKAAKRIVEATKHRKFISVDVEDVFITGLLAGDVGIKKNQLPFMYMIEEATNDRESYEILAWHTKKRDQQYIEAFESLKLNRCKSCRKSKNPDLEELKEK</sequence>
<organism>
    <name type="scientific">Caenorhabditis elegans</name>
    <dbReference type="NCBI Taxonomy" id="6239"/>
    <lineage>
        <taxon>Eukaryota</taxon>
        <taxon>Metazoa</taxon>
        <taxon>Ecdysozoa</taxon>
        <taxon>Nematoda</taxon>
        <taxon>Chromadorea</taxon>
        <taxon>Rhabditida</taxon>
        <taxon>Rhabditina</taxon>
        <taxon>Rhabditomorpha</taxon>
        <taxon>Rhabditoidea</taxon>
        <taxon>Rhabditidae</taxon>
        <taxon>Peloderinae</taxon>
        <taxon>Caenorhabditis</taxon>
    </lineage>
</organism>
<gene>
    <name evidence="9" type="primary">bre-2</name>
    <name type="ORF">Y39E4B.9</name>
</gene>
<proteinExistence type="evidence at protein level"/>
<dbReference type="EC" id="2.4.1.-"/>
<dbReference type="EMBL" id="AY533304">
    <property type="protein sequence ID" value="AAS21306.1"/>
    <property type="molecule type" value="mRNA"/>
</dbReference>
<dbReference type="EMBL" id="AL110487">
    <property type="protein sequence ID" value="CAB54430.2"/>
    <property type="molecule type" value="Genomic_DNA"/>
</dbReference>
<dbReference type="EMBL" id="AL110487">
    <property type="protein sequence ID" value="CAP16292.1"/>
    <property type="molecule type" value="Genomic_DNA"/>
</dbReference>
<dbReference type="RefSeq" id="NP_001122728.1">
    <property type="nucleotide sequence ID" value="NM_001129256.1"/>
</dbReference>
<dbReference type="RefSeq" id="NP_001367175.1">
    <molecule id="Q6QMT2-1"/>
    <property type="nucleotide sequence ID" value="NM_001379974.3"/>
</dbReference>
<dbReference type="RefSeq" id="NP_499715.2">
    <molecule id="Q6QMT2-2"/>
    <property type="nucleotide sequence ID" value="NM_067314.4"/>
</dbReference>
<dbReference type="SMR" id="Q6QMT2"/>
<dbReference type="FunCoup" id="Q6QMT2">
    <property type="interactions" value="917"/>
</dbReference>
<dbReference type="STRING" id="6239.Y39E4B.9c.1"/>
<dbReference type="CAZy" id="GT31">
    <property type="family name" value="Glycosyltransferase Family 31"/>
</dbReference>
<dbReference type="GlyCosmos" id="Q6QMT2">
    <property type="glycosylation" value="3 sites, No reported glycans"/>
</dbReference>
<dbReference type="PaxDb" id="6239-Y39E4B.9c"/>
<dbReference type="EnsemblMetazoa" id="Y39E4B.9a.1">
    <molecule id="Q6QMT2-2"/>
    <property type="protein sequence ID" value="Y39E4B.9a.1"/>
    <property type="gene ID" value="WBGene00000267"/>
</dbReference>
<dbReference type="EnsemblMetazoa" id="Y39E4B.9a.2">
    <molecule id="Q6QMT2-2"/>
    <property type="protein sequence ID" value="Y39E4B.9a.2"/>
    <property type="gene ID" value="WBGene00000267"/>
</dbReference>
<dbReference type="EnsemblMetazoa" id="Y39E4B.9b.1">
    <molecule id="Q6QMT2-1"/>
    <property type="protein sequence ID" value="Y39E4B.9b.1"/>
    <property type="gene ID" value="WBGene00000267"/>
</dbReference>
<dbReference type="GeneID" id="189753"/>
<dbReference type="KEGG" id="cel:CELE_Y39E4B.9"/>
<dbReference type="UCSC" id="Y39E4B.9b">
    <molecule id="Q6QMT2-1"/>
    <property type="organism name" value="c. elegans"/>
</dbReference>
<dbReference type="AGR" id="WB:WBGene00000267"/>
<dbReference type="CTD" id="189753"/>
<dbReference type="WormBase" id="Y39E4B.9a">
    <molecule id="Q6QMT2-2"/>
    <property type="protein sequence ID" value="CE36339"/>
    <property type="gene ID" value="WBGene00000267"/>
    <property type="gene designation" value="bre-2"/>
</dbReference>
<dbReference type="WormBase" id="Y39E4B.9b">
    <molecule id="Q6QMT2-1"/>
    <property type="protein sequence ID" value="CE21720"/>
    <property type="gene ID" value="WBGene00000267"/>
    <property type="gene designation" value="bre-2"/>
</dbReference>
<dbReference type="eggNOG" id="KOG2287">
    <property type="taxonomic scope" value="Eukaryota"/>
</dbReference>
<dbReference type="GeneTree" id="ENSGT00940000161798"/>
<dbReference type="HOGENOM" id="CLU_045590_0_0_1"/>
<dbReference type="InParanoid" id="Q6QMT2"/>
<dbReference type="OrthoDB" id="6086505at2759"/>
<dbReference type="PhylomeDB" id="Q6QMT2"/>
<dbReference type="UniPathway" id="UPA00378"/>
<dbReference type="PRO" id="PR:Q6QMT2"/>
<dbReference type="Proteomes" id="UP000001940">
    <property type="component" value="Chromosome III"/>
</dbReference>
<dbReference type="Bgee" id="WBGene00000267">
    <property type="expression patterns" value="Expressed in larva and 3 other cell types or tissues"/>
</dbReference>
<dbReference type="ExpressionAtlas" id="Q6QMT2">
    <property type="expression patterns" value="baseline and differential"/>
</dbReference>
<dbReference type="GO" id="GO:0000139">
    <property type="term" value="C:Golgi membrane"/>
    <property type="evidence" value="ECO:0000318"/>
    <property type="project" value="GO_Central"/>
</dbReference>
<dbReference type="GO" id="GO:0008375">
    <property type="term" value="F:acetylglucosaminyltransferase activity"/>
    <property type="evidence" value="ECO:0000250"/>
    <property type="project" value="UniProtKB"/>
</dbReference>
<dbReference type="GO" id="GO:0016757">
    <property type="term" value="F:glycosyltransferase activity"/>
    <property type="evidence" value="ECO:0000318"/>
    <property type="project" value="GO_Central"/>
</dbReference>
<dbReference type="GO" id="GO:0006493">
    <property type="term" value="P:protein O-linked glycosylation"/>
    <property type="evidence" value="ECO:0000318"/>
    <property type="project" value="GO_Central"/>
</dbReference>
<dbReference type="GO" id="GO:0009636">
    <property type="term" value="P:response to toxic substance"/>
    <property type="evidence" value="ECO:0000315"/>
    <property type="project" value="UniProtKB"/>
</dbReference>
<dbReference type="FunFam" id="3.90.550.50:FF:000047">
    <property type="entry name" value="Hexosyltransferase"/>
    <property type="match status" value="1"/>
</dbReference>
<dbReference type="Gene3D" id="3.90.550.50">
    <property type="match status" value="1"/>
</dbReference>
<dbReference type="InterPro" id="IPR002659">
    <property type="entry name" value="Glyco_trans_31"/>
</dbReference>
<dbReference type="PANTHER" id="PTHR11214:SF391">
    <property type="entry name" value="BETA-1,3-GALACTOSYLTRANSFERASE BRE-2-RELATED"/>
    <property type="match status" value="1"/>
</dbReference>
<dbReference type="PANTHER" id="PTHR11214">
    <property type="entry name" value="BETA-1,3-N-ACETYLGLUCOSAMINYLTRANSFERASE"/>
    <property type="match status" value="1"/>
</dbReference>
<dbReference type="Pfam" id="PF01762">
    <property type="entry name" value="Galactosyl_T"/>
    <property type="match status" value="1"/>
</dbReference>
<protein>
    <recommendedName>
        <fullName>Beta-1,3-galactosyltransferase bre-2</fullName>
        <ecNumber>2.4.1.-</ecNumber>
    </recommendedName>
    <alternativeName>
        <fullName>Bacillus thuringiensis toxin-resistant protein 2</fullName>
        <shortName>Bt toxin-resistant protein 2</shortName>
    </alternativeName>
</protein>
<evidence type="ECO:0000250" key="1">
    <source>
        <dbReference type="UniProtKB" id="Q95US5"/>
    </source>
</evidence>
<evidence type="ECO:0000250" key="2">
    <source>
        <dbReference type="UniProtKB" id="Q9Y5Z6"/>
    </source>
</evidence>
<evidence type="ECO:0000255" key="3"/>
<evidence type="ECO:0000269" key="4">
    <source>
    </source>
</evidence>
<evidence type="ECO:0000269" key="5">
    <source>
    </source>
</evidence>
<evidence type="ECO:0000269" key="6">
    <source>
    </source>
</evidence>
<evidence type="ECO:0000303" key="7">
    <source>
    </source>
</evidence>
<evidence type="ECO:0000305" key="8"/>
<evidence type="ECO:0000312" key="9">
    <source>
        <dbReference type="EMBL" id="AAS21306.1"/>
    </source>
</evidence>
<evidence type="ECO:0000312" key="10">
    <source>
        <dbReference type="EMBL" id="CAP16292.1"/>
    </source>
</evidence>
<accession>Q6QMT2</accession>
<accession>Q9U2K3</accession>
<keyword id="KW-0025">Alternative splicing</keyword>
<keyword id="KW-0325">Glycoprotein</keyword>
<keyword id="KW-0328">Glycosyltransferase</keyword>
<keyword id="KW-0333">Golgi apparatus</keyword>
<keyword id="KW-0978">Insecticide resistance</keyword>
<keyword id="KW-0472">Membrane</keyword>
<keyword id="KW-1185">Reference proteome</keyword>
<keyword id="KW-0735">Signal-anchor</keyword>
<keyword id="KW-0808">Transferase</keyword>
<keyword id="KW-0812">Transmembrane</keyword>
<keyword id="KW-1133">Transmembrane helix</keyword>
<feature type="chain" id="PRO_0000324667" description="Beta-1,3-galactosyltransferase bre-2">
    <location>
        <begin position="1"/>
        <end position="359"/>
    </location>
</feature>
<feature type="topological domain" description="Cytoplasmic" evidence="3">
    <location>
        <begin position="1"/>
        <end position="11"/>
    </location>
</feature>
<feature type="transmembrane region" description="Helical; Signal-anchor for type II membrane protein">
    <location>
        <begin position="12"/>
        <end position="29"/>
    </location>
</feature>
<feature type="topological domain" description="Lumenal" evidence="3">
    <location>
        <begin position="30"/>
        <end position="359"/>
    </location>
</feature>
<feature type="glycosylation site" description="N-linked (GlcNAc...) asparagine" evidence="3">
    <location>
        <position position="73"/>
    </location>
</feature>
<feature type="glycosylation site" description="N-linked (GlcNAc...) asparagine" evidence="3">
    <location>
        <position position="163"/>
    </location>
</feature>
<feature type="glycosylation site" description="N-linked (GlcNAc...) asparagine" evidence="3">
    <location>
        <position position="209"/>
    </location>
</feature>
<feature type="splice variant" id="VSP_052711" description="In isoform a." evidence="7">
    <original>DVFITGLLAGDVGIKKNQLPFMY</original>
    <variation>KLLKMCSLLACLPATLGSKKINFHLCI</variation>
    <location>
        <begin position="282"/>
        <end position="304"/>
    </location>
</feature>
<feature type="splice variant" id="VSP_052712" description="In isoform a." evidence="7">
    <location>
        <begin position="305"/>
        <end position="359"/>
    </location>
</feature>
<feature type="mutagenesis site" description="In ye31; resistant to Bacillus thuringiensis crystal5B toxin. Susceptible to C.cinerea galectin Cgl2." evidence="4 5">
    <original>R</original>
    <variation>Q</variation>
    <location>
        <position position="106"/>
    </location>
</feature>
<comment type="function">
    <text evidence="1 4 5">Transfers N-acetylgalactosamine onto carbohydrate substrates (By similarity). Involved in susceptibility to pore-forming crystal toxins in conjunction with bre-1, bre-3, bre-4, and bre-5 (PubMed:12944392). Involved in resistance to the nematotoxic C.cinerea galectin Cgl2 (PubMed:20062796).</text>
</comment>
<comment type="pathway">
    <text evidence="2">Protein modification; protein glycosylation.</text>
</comment>
<comment type="subcellular location">
    <subcellularLocation>
        <location evidence="3 8">Golgi apparatus membrane</location>
        <topology evidence="3 8">Single-pass type II membrane protein</topology>
    </subcellularLocation>
</comment>
<comment type="alternative products">
    <event type="alternative splicing"/>
    <isoform>
        <id>Q6QMT2-1</id>
        <name evidence="4">b</name>
        <sequence type="displayed"/>
    </isoform>
    <isoform>
        <id>Q6QMT2-2</id>
        <name evidence="6">a</name>
        <sequence type="described" ref="VSP_052711 VSP_052712"/>
    </isoform>
</comment>
<comment type="disruption phenotype">
    <text evidence="4">Worms exhibit resistance to the Cry5B toxin produced by Bacillus thuringiensis. This is thought to be due to mutants having reduced population of glycolipids which are targeted by the Cry5B protein.</text>
</comment>
<comment type="similarity">
    <text evidence="3">Belongs to the glycosyltransferase 31 family.</text>
</comment>